<evidence type="ECO:0000255" key="1">
    <source>
        <dbReference type="HAMAP-Rule" id="MF_00519"/>
    </source>
</evidence>
<protein>
    <recommendedName>
        <fullName evidence="1">L-arabinose isomerase</fullName>
        <ecNumber evidence="1">5.3.1.4</ecNumber>
    </recommendedName>
</protein>
<keyword id="KW-0054">Arabinose catabolism</keyword>
<keyword id="KW-0119">Carbohydrate metabolism</keyword>
<keyword id="KW-0413">Isomerase</keyword>
<keyword id="KW-0464">Manganese</keyword>
<keyword id="KW-0479">Metal-binding</keyword>
<organism>
    <name type="scientific">Yersinia pestis (strain Pestoides F)</name>
    <dbReference type="NCBI Taxonomy" id="386656"/>
    <lineage>
        <taxon>Bacteria</taxon>
        <taxon>Pseudomonadati</taxon>
        <taxon>Pseudomonadota</taxon>
        <taxon>Gammaproteobacteria</taxon>
        <taxon>Enterobacterales</taxon>
        <taxon>Yersiniaceae</taxon>
        <taxon>Yersinia</taxon>
    </lineage>
</organism>
<proteinExistence type="inferred from homology"/>
<accession>A4TJ19</accession>
<feature type="chain" id="PRO_0000312624" description="L-arabinose isomerase">
    <location>
        <begin position="1"/>
        <end position="500"/>
    </location>
</feature>
<feature type="binding site" evidence="1">
    <location>
        <position position="306"/>
    </location>
    <ligand>
        <name>Mn(2+)</name>
        <dbReference type="ChEBI" id="CHEBI:29035"/>
    </ligand>
</feature>
<feature type="binding site" evidence="1">
    <location>
        <position position="333"/>
    </location>
    <ligand>
        <name>Mn(2+)</name>
        <dbReference type="ChEBI" id="CHEBI:29035"/>
    </ligand>
</feature>
<feature type="binding site" evidence="1">
    <location>
        <position position="350"/>
    </location>
    <ligand>
        <name>Mn(2+)</name>
        <dbReference type="ChEBI" id="CHEBI:29035"/>
    </ligand>
</feature>
<feature type="binding site" evidence="1">
    <location>
        <position position="450"/>
    </location>
    <ligand>
        <name>Mn(2+)</name>
        <dbReference type="ChEBI" id="CHEBI:29035"/>
    </ligand>
</feature>
<reference key="1">
    <citation type="submission" date="2007-02" db="EMBL/GenBank/DDBJ databases">
        <title>Complete sequence of chromosome of Yersinia pestis Pestoides F.</title>
        <authorList>
            <consortium name="US DOE Joint Genome Institute"/>
            <person name="Copeland A."/>
            <person name="Lucas S."/>
            <person name="Lapidus A."/>
            <person name="Barry K."/>
            <person name="Detter J.C."/>
            <person name="Glavina del Rio T."/>
            <person name="Hammon N."/>
            <person name="Israni S."/>
            <person name="Dalin E."/>
            <person name="Tice H."/>
            <person name="Pitluck S."/>
            <person name="Di Bartolo G."/>
            <person name="Chain P."/>
            <person name="Malfatti S."/>
            <person name="Shin M."/>
            <person name="Vergez L."/>
            <person name="Schmutz J."/>
            <person name="Larimer F."/>
            <person name="Land M."/>
            <person name="Hauser L."/>
            <person name="Worsham P."/>
            <person name="Chu M."/>
            <person name="Bearden S."/>
            <person name="Garcia E."/>
            <person name="Richardson P."/>
        </authorList>
    </citation>
    <scope>NUCLEOTIDE SEQUENCE [LARGE SCALE GENOMIC DNA]</scope>
    <source>
        <strain>Pestoides F</strain>
    </source>
</reference>
<dbReference type="EC" id="5.3.1.4" evidence="1"/>
<dbReference type="EMBL" id="CP000668">
    <property type="protein sequence ID" value="ABP39281.1"/>
    <property type="molecule type" value="Genomic_DNA"/>
</dbReference>
<dbReference type="RefSeq" id="WP_002210591.1">
    <property type="nucleotide sequence ID" value="NZ_CP009715.1"/>
</dbReference>
<dbReference type="SMR" id="A4TJ19"/>
<dbReference type="GeneID" id="57976417"/>
<dbReference type="KEGG" id="ypp:YPDSF_0881"/>
<dbReference type="PATRIC" id="fig|386656.14.peg.2973"/>
<dbReference type="UniPathway" id="UPA00145">
    <property type="reaction ID" value="UER00565"/>
</dbReference>
<dbReference type="GO" id="GO:0005829">
    <property type="term" value="C:cytosol"/>
    <property type="evidence" value="ECO:0007669"/>
    <property type="project" value="TreeGrafter"/>
</dbReference>
<dbReference type="GO" id="GO:0008733">
    <property type="term" value="F:L-arabinose isomerase activity"/>
    <property type="evidence" value="ECO:0007669"/>
    <property type="project" value="UniProtKB-UniRule"/>
</dbReference>
<dbReference type="GO" id="GO:0030145">
    <property type="term" value="F:manganese ion binding"/>
    <property type="evidence" value="ECO:0007669"/>
    <property type="project" value="UniProtKB-UniRule"/>
</dbReference>
<dbReference type="GO" id="GO:0019569">
    <property type="term" value="P:L-arabinose catabolic process to xylulose 5-phosphate"/>
    <property type="evidence" value="ECO:0007669"/>
    <property type="project" value="UniProtKB-UniRule"/>
</dbReference>
<dbReference type="CDD" id="cd03557">
    <property type="entry name" value="L-arabinose_isomerase"/>
    <property type="match status" value="1"/>
</dbReference>
<dbReference type="FunFam" id="3.40.50.10940:FF:000001">
    <property type="entry name" value="L-arabinose isomerase"/>
    <property type="match status" value="1"/>
</dbReference>
<dbReference type="Gene3D" id="3.40.50.10940">
    <property type="match status" value="1"/>
</dbReference>
<dbReference type="HAMAP" id="MF_00519">
    <property type="entry name" value="Arabinose_Isome"/>
    <property type="match status" value="1"/>
</dbReference>
<dbReference type="InterPro" id="IPR024664">
    <property type="entry name" value="Ara_Isoase_C"/>
</dbReference>
<dbReference type="InterPro" id="IPR055390">
    <property type="entry name" value="AraA_central"/>
</dbReference>
<dbReference type="InterPro" id="IPR055389">
    <property type="entry name" value="AraA_N"/>
</dbReference>
<dbReference type="InterPro" id="IPR038583">
    <property type="entry name" value="AraA_N_sf"/>
</dbReference>
<dbReference type="InterPro" id="IPR004216">
    <property type="entry name" value="Fuc/Ara_isomerase_C"/>
</dbReference>
<dbReference type="InterPro" id="IPR009015">
    <property type="entry name" value="Fucose_isomerase_N/cen_sf"/>
</dbReference>
<dbReference type="InterPro" id="IPR003762">
    <property type="entry name" value="Lara_isomerase"/>
</dbReference>
<dbReference type="NCBIfam" id="NF002795">
    <property type="entry name" value="PRK02929.1"/>
    <property type="match status" value="1"/>
</dbReference>
<dbReference type="PANTHER" id="PTHR38464">
    <property type="entry name" value="L-ARABINOSE ISOMERASE"/>
    <property type="match status" value="1"/>
</dbReference>
<dbReference type="PANTHER" id="PTHR38464:SF1">
    <property type="entry name" value="L-ARABINOSE ISOMERASE"/>
    <property type="match status" value="1"/>
</dbReference>
<dbReference type="Pfam" id="PF24856">
    <property type="entry name" value="AraA_central"/>
    <property type="match status" value="1"/>
</dbReference>
<dbReference type="Pfam" id="PF02610">
    <property type="entry name" value="AraA_N"/>
    <property type="match status" value="1"/>
</dbReference>
<dbReference type="Pfam" id="PF11762">
    <property type="entry name" value="Arabinose_Iso_C"/>
    <property type="match status" value="1"/>
</dbReference>
<dbReference type="PIRSF" id="PIRSF001478">
    <property type="entry name" value="L-ara_isomerase"/>
    <property type="match status" value="1"/>
</dbReference>
<dbReference type="SUPFAM" id="SSF50443">
    <property type="entry name" value="FucI/AraA C-terminal domain-like"/>
    <property type="match status" value="1"/>
</dbReference>
<dbReference type="SUPFAM" id="SSF53743">
    <property type="entry name" value="FucI/AraA N-terminal and middle domains"/>
    <property type="match status" value="1"/>
</dbReference>
<name>ARAA_YERPP</name>
<comment type="function">
    <text evidence="1">Catalyzes the conversion of L-arabinose to L-ribulose.</text>
</comment>
<comment type="catalytic activity">
    <reaction evidence="1">
        <text>beta-L-arabinopyranose = L-ribulose</text>
        <dbReference type="Rhea" id="RHEA:14821"/>
        <dbReference type="ChEBI" id="CHEBI:16880"/>
        <dbReference type="ChEBI" id="CHEBI:40886"/>
        <dbReference type="EC" id="5.3.1.4"/>
    </reaction>
</comment>
<comment type="cofactor">
    <cofactor evidence="1">
        <name>Mn(2+)</name>
        <dbReference type="ChEBI" id="CHEBI:29035"/>
    </cofactor>
    <text evidence="1">Binds 1 Mn(2+) ion per subunit.</text>
</comment>
<comment type="pathway">
    <text evidence="1">Carbohydrate degradation; L-arabinose degradation via L-ribulose; D-xylulose 5-phosphate from L-arabinose (bacterial route): step 1/3.</text>
</comment>
<comment type="subunit">
    <text evidence="1">Homohexamer.</text>
</comment>
<comment type="similarity">
    <text evidence="1">Belongs to the arabinose isomerase family.</text>
</comment>
<sequence>MDVFKQSEVWFVIGSQNLYGPKTLQQVMDNAHQVVNSLNNEAGLPVKLVLKPLVTTPDEITALCREANYDTACIGIMTWLHTFSPAKMWIGGLSILNKPLLQFHTQFNAQIPWKTMDMDFMNLNQTAHGGREFGFIGARMRQQHSVITGHWQDKEAHQRIGQWMRVAAAKQESQQLKVARFGDNMREVAVTEGDKVAAQIQFGYSVNAYGIGDLVAVVDAVSKGDIDTLVEEYEATYRFTDAVKLNGDKRENLLDAARIELGMTRFLEQGGFKAFTTNFENLYGLKQLPGLAVQRLMQQGYGFGGEGDWKTAALLRILKVMGTGLKGGTSFMEDYTYNFQPGNDLVVGSHMLEVCPSIAKEEKPLLDVQHLGIGGKADPARLIFSTPAGPALNASLIDMGNRFRLLVNVVDTVEQPHPLPKLPVARAIWQAQPSLATAAEAWIIAGGAHHTVFSQAVGVDELRLYAEMHGIEFLLIDNDTTLPAFKNEIRWNEVYYQLNR</sequence>
<gene>
    <name evidence="1" type="primary">araA</name>
    <name type="ordered locus">YPDSF_0881</name>
</gene>